<gene>
    <name type="primary">Zip99C</name>
    <name type="ORF">CG7816</name>
</gene>
<proteinExistence type="evidence at transcript level"/>
<sequence>MTTNSSFFDEHIAMIYSNLMDQYMPEYFKSFEYTPWVFSLLGSVVIGLSGIFPLIIIPTEEKMAKEGYKDPADSKLLRVLLSFAVGGLLGDVFLHLLPEAWEGDNQDPSSHPSLRSGLWVLSGILIFTIVEKIFSGYASADEENPQPKCVEIANCLLRRHGGQLPEGETSESCGGACDIEDVGKVCFLREQEQKSKERKEQPKKVAGYLNLLANSIDNFTHGLAVAGSFLVSFRHGILATFAILLHEIPHEVGDFAILLRSGFSRWDAARAQLLTAGAGLLGALVAIGGSGVTSAMEARTSWIMPFTAGGFLHIALVTVLPDLLKEEERKESIKQLLALVFGIALMAVMTMLFEH</sequence>
<reference key="1">
    <citation type="journal article" date="2000" name="Science">
        <title>The genome sequence of Drosophila melanogaster.</title>
        <authorList>
            <person name="Adams M.D."/>
            <person name="Celniker S.E."/>
            <person name="Holt R.A."/>
            <person name="Evans C.A."/>
            <person name="Gocayne J.D."/>
            <person name="Amanatides P.G."/>
            <person name="Scherer S.E."/>
            <person name="Li P.W."/>
            <person name="Hoskins R.A."/>
            <person name="Galle R.F."/>
            <person name="George R.A."/>
            <person name="Lewis S.E."/>
            <person name="Richards S."/>
            <person name="Ashburner M."/>
            <person name="Henderson S.N."/>
            <person name="Sutton G.G."/>
            <person name="Wortman J.R."/>
            <person name="Yandell M.D."/>
            <person name="Zhang Q."/>
            <person name="Chen L.X."/>
            <person name="Brandon R.C."/>
            <person name="Rogers Y.-H.C."/>
            <person name="Blazej R.G."/>
            <person name="Champe M."/>
            <person name="Pfeiffer B.D."/>
            <person name="Wan K.H."/>
            <person name="Doyle C."/>
            <person name="Baxter E.G."/>
            <person name="Helt G."/>
            <person name="Nelson C.R."/>
            <person name="Miklos G.L.G."/>
            <person name="Abril J.F."/>
            <person name="Agbayani A."/>
            <person name="An H.-J."/>
            <person name="Andrews-Pfannkoch C."/>
            <person name="Baldwin D."/>
            <person name="Ballew R.M."/>
            <person name="Basu A."/>
            <person name="Baxendale J."/>
            <person name="Bayraktaroglu L."/>
            <person name="Beasley E.M."/>
            <person name="Beeson K.Y."/>
            <person name="Benos P.V."/>
            <person name="Berman B.P."/>
            <person name="Bhandari D."/>
            <person name="Bolshakov S."/>
            <person name="Borkova D."/>
            <person name="Botchan M.R."/>
            <person name="Bouck J."/>
            <person name="Brokstein P."/>
            <person name="Brottier P."/>
            <person name="Burtis K.C."/>
            <person name="Busam D.A."/>
            <person name="Butler H."/>
            <person name="Cadieu E."/>
            <person name="Center A."/>
            <person name="Chandra I."/>
            <person name="Cherry J.M."/>
            <person name="Cawley S."/>
            <person name="Dahlke C."/>
            <person name="Davenport L.B."/>
            <person name="Davies P."/>
            <person name="de Pablos B."/>
            <person name="Delcher A."/>
            <person name="Deng Z."/>
            <person name="Mays A.D."/>
            <person name="Dew I."/>
            <person name="Dietz S.M."/>
            <person name="Dodson K."/>
            <person name="Doup L.E."/>
            <person name="Downes M."/>
            <person name="Dugan-Rocha S."/>
            <person name="Dunkov B.C."/>
            <person name="Dunn P."/>
            <person name="Durbin K.J."/>
            <person name="Evangelista C.C."/>
            <person name="Ferraz C."/>
            <person name="Ferriera S."/>
            <person name="Fleischmann W."/>
            <person name="Fosler C."/>
            <person name="Gabrielian A.E."/>
            <person name="Garg N.S."/>
            <person name="Gelbart W.M."/>
            <person name="Glasser K."/>
            <person name="Glodek A."/>
            <person name="Gong F."/>
            <person name="Gorrell J.H."/>
            <person name="Gu Z."/>
            <person name="Guan P."/>
            <person name="Harris M."/>
            <person name="Harris N.L."/>
            <person name="Harvey D.A."/>
            <person name="Heiman T.J."/>
            <person name="Hernandez J.R."/>
            <person name="Houck J."/>
            <person name="Hostin D."/>
            <person name="Houston K.A."/>
            <person name="Howland T.J."/>
            <person name="Wei M.-H."/>
            <person name="Ibegwam C."/>
            <person name="Jalali M."/>
            <person name="Kalush F."/>
            <person name="Karpen G.H."/>
            <person name="Ke Z."/>
            <person name="Kennison J.A."/>
            <person name="Ketchum K.A."/>
            <person name="Kimmel B.E."/>
            <person name="Kodira C.D."/>
            <person name="Kraft C.L."/>
            <person name="Kravitz S."/>
            <person name="Kulp D."/>
            <person name="Lai Z."/>
            <person name="Lasko P."/>
            <person name="Lei Y."/>
            <person name="Levitsky A.A."/>
            <person name="Li J.H."/>
            <person name="Li Z."/>
            <person name="Liang Y."/>
            <person name="Lin X."/>
            <person name="Liu X."/>
            <person name="Mattei B."/>
            <person name="McIntosh T.C."/>
            <person name="McLeod M.P."/>
            <person name="McPherson D."/>
            <person name="Merkulov G."/>
            <person name="Milshina N.V."/>
            <person name="Mobarry C."/>
            <person name="Morris J."/>
            <person name="Moshrefi A."/>
            <person name="Mount S.M."/>
            <person name="Moy M."/>
            <person name="Murphy B."/>
            <person name="Murphy L."/>
            <person name="Muzny D.M."/>
            <person name="Nelson D.L."/>
            <person name="Nelson D.R."/>
            <person name="Nelson K.A."/>
            <person name="Nixon K."/>
            <person name="Nusskern D.R."/>
            <person name="Pacleb J.M."/>
            <person name="Palazzolo M."/>
            <person name="Pittman G.S."/>
            <person name="Pan S."/>
            <person name="Pollard J."/>
            <person name="Puri V."/>
            <person name="Reese M.G."/>
            <person name="Reinert K."/>
            <person name="Remington K."/>
            <person name="Saunders R.D.C."/>
            <person name="Scheeler F."/>
            <person name="Shen H."/>
            <person name="Shue B.C."/>
            <person name="Siden-Kiamos I."/>
            <person name="Simpson M."/>
            <person name="Skupski M.P."/>
            <person name="Smith T.J."/>
            <person name="Spier E."/>
            <person name="Spradling A.C."/>
            <person name="Stapleton M."/>
            <person name="Strong R."/>
            <person name="Sun E."/>
            <person name="Svirskas R."/>
            <person name="Tector C."/>
            <person name="Turner R."/>
            <person name="Venter E."/>
            <person name="Wang A.H."/>
            <person name="Wang X."/>
            <person name="Wang Z.-Y."/>
            <person name="Wassarman D.A."/>
            <person name="Weinstock G.M."/>
            <person name="Weissenbach J."/>
            <person name="Williams S.M."/>
            <person name="Woodage T."/>
            <person name="Worley K.C."/>
            <person name="Wu D."/>
            <person name="Yang S."/>
            <person name="Yao Q.A."/>
            <person name="Ye J."/>
            <person name="Yeh R.-F."/>
            <person name="Zaveri J.S."/>
            <person name="Zhan M."/>
            <person name="Zhang G."/>
            <person name="Zhao Q."/>
            <person name="Zheng L."/>
            <person name="Zheng X.H."/>
            <person name="Zhong F.N."/>
            <person name="Zhong W."/>
            <person name="Zhou X."/>
            <person name="Zhu S.C."/>
            <person name="Zhu X."/>
            <person name="Smith H.O."/>
            <person name="Gibbs R.A."/>
            <person name="Myers E.W."/>
            <person name="Rubin G.M."/>
            <person name="Venter J.C."/>
        </authorList>
    </citation>
    <scope>NUCLEOTIDE SEQUENCE [LARGE SCALE GENOMIC DNA]</scope>
    <source>
        <strain>Berkeley</strain>
    </source>
</reference>
<reference key="2">
    <citation type="journal article" date="2002" name="Genome Biol.">
        <title>Annotation of the Drosophila melanogaster euchromatic genome: a systematic review.</title>
        <authorList>
            <person name="Misra S."/>
            <person name="Crosby M.A."/>
            <person name="Mungall C.J."/>
            <person name="Matthews B.B."/>
            <person name="Campbell K.S."/>
            <person name="Hradecky P."/>
            <person name="Huang Y."/>
            <person name="Kaminker J.S."/>
            <person name="Millburn G.H."/>
            <person name="Prochnik S.E."/>
            <person name="Smith C.D."/>
            <person name="Tupy J.L."/>
            <person name="Whitfield E.J."/>
            <person name="Bayraktaroglu L."/>
            <person name="Berman B.P."/>
            <person name="Bettencourt B.R."/>
            <person name="Celniker S.E."/>
            <person name="de Grey A.D.N.J."/>
            <person name="Drysdale R.A."/>
            <person name="Harris N.L."/>
            <person name="Richter J."/>
            <person name="Russo S."/>
            <person name="Schroeder A.J."/>
            <person name="Shu S.Q."/>
            <person name="Stapleton M."/>
            <person name="Yamada C."/>
            <person name="Ashburner M."/>
            <person name="Gelbart W.M."/>
            <person name="Rubin G.M."/>
            <person name="Lewis S.E."/>
        </authorList>
    </citation>
    <scope>GENOME REANNOTATION</scope>
    <source>
        <strain>Berkeley</strain>
    </source>
</reference>
<reference key="3">
    <citation type="journal article" date="2002" name="Genome Biol.">
        <title>A Drosophila full-length cDNA resource.</title>
        <authorList>
            <person name="Stapleton M."/>
            <person name="Carlson J.W."/>
            <person name="Brokstein P."/>
            <person name="Yu C."/>
            <person name="Champe M."/>
            <person name="George R.A."/>
            <person name="Guarin H."/>
            <person name="Kronmiller B."/>
            <person name="Pacleb J.M."/>
            <person name="Park S."/>
            <person name="Wan K.H."/>
            <person name="Rubin G.M."/>
            <person name="Celniker S.E."/>
        </authorList>
    </citation>
    <scope>NUCLEOTIDE SEQUENCE [LARGE SCALE MRNA]</scope>
    <source>
        <strain>Berkeley</strain>
        <tissue>Head</tissue>
    </source>
</reference>
<reference key="4">
    <citation type="journal article" date="2013" name="J. Biol. Inorg. Chem.">
        <title>In vivo zinc toxicity phenotypes provide a sensitized background that suggests zinc transport activities for most of the Drosophila Zip and ZnT genes.</title>
        <authorList>
            <person name="Lye J.C."/>
            <person name="Richards C.D."/>
            <person name="Dechen K."/>
            <person name="Warr C.G."/>
            <person name="Burke R."/>
        </authorList>
    </citation>
    <scope>FUNCTION</scope>
    <scope>SUBCELLULAR LOCATION</scope>
</reference>
<evidence type="ECO:0000255" key="1"/>
<evidence type="ECO:0000269" key="2">
    <source>
    </source>
</evidence>
<evidence type="ECO:0000305" key="3"/>
<name>S39AD_DROME</name>
<dbReference type="EMBL" id="AE014297">
    <property type="protein sequence ID" value="AAN14194.1"/>
    <property type="molecule type" value="Genomic_DNA"/>
</dbReference>
<dbReference type="EMBL" id="BT001774">
    <property type="protein sequence ID" value="AAN71529.1"/>
    <property type="molecule type" value="mRNA"/>
</dbReference>
<dbReference type="RefSeq" id="NP_001189313.1">
    <property type="nucleotide sequence ID" value="NM_001202384.1"/>
</dbReference>
<dbReference type="RefSeq" id="NP_001189314.1">
    <property type="nucleotide sequence ID" value="NM_001202385.2"/>
</dbReference>
<dbReference type="RefSeq" id="NP_001189315.1">
    <property type="nucleotide sequence ID" value="NM_001202386.2"/>
</dbReference>
<dbReference type="RefSeq" id="NP_733319.1">
    <property type="nucleotide sequence ID" value="NM_170440.2"/>
</dbReference>
<dbReference type="RefSeq" id="NP_733320.1">
    <property type="nucleotide sequence ID" value="NM_170441.2"/>
</dbReference>
<dbReference type="RefSeq" id="NP_733321.1">
    <property type="nucleotide sequence ID" value="NM_170442.2"/>
</dbReference>
<dbReference type="RefSeq" id="NP_733322.1">
    <property type="nucleotide sequence ID" value="NM_170443.3"/>
</dbReference>
<dbReference type="RefSeq" id="NP_733323.1">
    <property type="nucleotide sequence ID" value="NM_170444.3"/>
</dbReference>
<dbReference type="RefSeq" id="NP_733324.1">
    <property type="nucleotide sequence ID" value="NM_170445.2"/>
</dbReference>
<dbReference type="SMR" id="Q9VAF0"/>
<dbReference type="BioGRID" id="68392">
    <property type="interactions" value="17"/>
</dbReference>
<dbReference type="FunCoup" id="Q9VAF0">
    <property type="interactions" value="1024"/>
</dbReference>
<dbReference type="IntAct" id="Q9VAF0">
    <property type="interactions" value="5"/>
</dbReference>
<dbReference type="STRING" id="7227.FBpp0088864"/>
<dbReference type="TCDB" id="2.A.5.4.20">
    <property type="family name" value="the zinc (zn(2+))-iron (fe(2+)) permease (zip) family"/>
</dbReference>
<dbReference type="GlyCosmos" id="Q9VAF0">
    <property type="glycosylation" value="2 sites, No reported glycans"/>
</dbReference>
<dbReference type="GlyGen" id="Q9VAF0">
    <property type="glycosylation" value="2 sites"/>
</dbReference>
<dbReference type="PaxDb" id="7227-FBpp0088864"/>
<dbReference type="DNASU" id="43533"/>
<dbReference type="EnsemblMetazoa" id="FBtr0089920">
    <property type="protein sequence ID" value="FBpp0088859"/>
    <property type="gene ID" value="FBgn0039714"/>
</dbReference>
<dbReference type="EnsemblMetazoa" id="FBtr0089921">
    <property type="protein sequence ID" value="FBpp0088860"/>
    <property type="gene ID" value="FBgn0039714"/>
</dbReference>
<dbReference type="EnsemblMetazoa" id="FBtr0089922">
    <property type="protein sequence ID" value="FBpp0088861"/>
    <property type="gene ID" value="FBgn0039714"/>
</dbReference>
<dbReference type="EnsemblMetazoa" id="FBtr0089923">
    <property type="protein sequence ID" value="FBpp0088862"/>
    <property type="gene ID" value="FBgn0039714"/>
</dbReference>
<dbReference type="EnsemblMetazoa" id="FBtr0089924">
    <property type="protein sequence ID" value="FBpp0088863"/>
    <property type="gene ID" value="FBgn0039714"/>
</dbReference>
<dbReference type="EnsemblMetazoa" id="FBtr0089925">
    <property type="protein sequence ID" value="FBpp0088864"/>
    <property type="gene ID" value="FBgn0039714"/>
</dbReference>
<dbReference type="EnsemblMetazoa" id="FBtr0303032">
    <property type="protein sequence ID" value="FBpp0292151"/>
    <property type="gene ID" value="FBgn0039714"/>
</dbReference>
<dbReference type="EnsemblMetazoa" id="FBtr0303033">
    <property type="protein sequence ID" value="FBpp0292152"/>
    <property type="gene ID" value="FBgn0039714"/>
</dbReference>
<dbReference type="EnsemblMetazoa" id="FBtr0303034">
    <property type="protein sequence ID" value="FBpp0292153"/>
    <property type="gene ID" value="FBgn0039714"/>
</dbReference>
<dbReference type="GeneID" id="43533"/>
<dbReference type="KEGG" id="dme:Dmel_CG7816"/>
<dbReference type="UCSC" id="CG7816-RA">
    <property type="organism name" value="d. melanogaster"/>
</dbReference>
<dbReference type="AGR" id="FB:FBgn0039714"/>
<dbReference type="CTD" id="43533"/>
<dbReference type="FlyBase" id="FBgn0039714">
    <property type="gene designation" value="Zip99C"/>
</dbReference>
<dbReference type="VEuPathDB" id="VectorBase:FBgn0039714"/>
<dbReference type="eggNOG" id="KOG2694">
    <property type="taxonomic scope" value="Eukaryota"/>
</dbReference>
<dbReference type="GeneTree" id="ENSGT00940000157349"/>
<dbReference type="HOGENOM" id="CLU_015114_0_2_1"/>
<dbReference type="InParanoid" id="Q9VAF0"/>
<dbReference type="OMA" id="HEVPHHI"/>
<dbReference type="OrthoDB" id="200954at2759"/>
<dbReference type="PhylomeDB" id="Q9VAF0"/>
<dbReference type="SignaLink" id="Q9VAF0"/>
<dbReference type="BioGRID-ORCS" id="43533">
    <property type="hits" value="0 hits in 1 CRISPR screen"/>
</dbReference>
<dbReference type="GenomeRNAi" id="43533"/>
<dbReference type="PRO" id="PR:Q9VAF0"/>
<dbReference type="Proteomes" id="UP000000803">
    <property type="component" value="Chromosome 3R"/>
</dbReference>
<dbReference type="Bgee" id="FBgn0039714">
    <property type="expression patterns" value="Expressed in midgut large flat cell (Drosophila) in digestive tract and 180 other cell types or tissues"/>
</dbReference>
<dbReference type="ExpressionAtlas" id="Q9VAF0">
    <property type="expression patterns" value="baseline and differential"/>
</dbReference>
<dbReference type="GO" id="GO:0016323">
    <property type="term" value="C:basolateral plasma membrane"/>
    <property type="evidence" value="ECO:0000314"/>
    <property type="project" value="FlyBase"/>
</dbReference>
<dbReference type="GO" id="GO:0005783">
    <property type="term" value="C:endoplasmic reticulum"/>
    <property type="evidence" value="ECO:0000314"/>
    <property type="project" value="FlyBase"/>
</dbReference>
<dbReference type="GO" id="GO:0005794">
    <property type="term" value="C:Golgi apparatus"/>
    <property type="evidence" value="ECO:0000314"/>
    <property type="project" value="FlyBase"/>
</dbReference>
<dbReference type="GO" id="GO:0000139">
    <property type="term" value="C:Golgi membrane"/>
    <property type="evidence" value="ECO:0007669"/>
    <property type="project" value="UniProtKB-SubCell"/>
</dbReference>
<dbReference type="GO" id="GO:0005506">
    <property type="term" value="F:iron ion binding"/>
    <property type="evidence" value="ECO:0000315"/>
    <property type="project" value="FlyBase"/>
</dbReference>
<dbReference type="GO" id="GO:0005381">
    <property type="term" value="F:iron ion transmembrane transporter activity"/>
    <property type="evidence" value="ECO:0000314"/>
    <property type="project" value="FlyBase"/>
</dbReference>
<dbReference type="GO" id="GO:0005385">
    <property type="term" value="F:zinc ion transmembrane transporter activity"/>
    <property type="evidence" value="ECO:0000318"/>
    <property type="project" value="GO_Central"/>
</dbReference>
<dbReference type="GO" id="GO:0010312">
    <property type="term" value="P:detoxification of zinc ion"/>
    <property type="evidence" value="ECO:0000315"/>
    <property type="project" value="FlyBase"/>
</dbReference>
<dbReference type="GO" id="GO:0006882">
    <property type="term" value="P:intracellular zinc ion homeostasis"/>
    <property type="evidence" value="ECO:0000318"/>
    <property type="project" value="GO_Central"/>
</dbReference>
<dbReference type="GO" id="GO:0006826">
    <property type="term" value="P:iron ion transport"/>
    <property type="evidence" value="ECO:0000315"/>
    <property type="project" value="FlyBase"/>
</dbReference>
<dbReference type="GO" id="GO:0060586">
    <property type="term" value="P:multicellular organismal-level iron ion homeostasis"/>
    <property type="evidence" value="ECO:0000315"/>
    <property type="project" value="FlyBase"/>
</dbReference>
<dbReference type="GO" id="GO:0071577">
    <property type="term" value="P:zinc ion transmembrane transport"/>
    <property type="evidence" value="ECO:0000318"/>
    <property type="project" value="GO_Central"/>
</dbReference>
<dbReference type="InterPro" id="IPR003689">
    <property type="entry name" value="ZIP"/>
</dbReference>
<dbReference type="PANTHER" id="PTHR16950">
    <property type="entry name" value="ZINC TRANSPORTER SLC39A7 HISTIDINE-RICH MEMBRANE PROTEIN KE4"/>
    <property type="match status" value="1"/>
</dbReference>
<dbReference type="PANTHER" id="PTHR16950:SF16">
    <property type="entry name" value="ZINC TRANSPORTER ZIP13"/>
    <property type="match status" value="1"/>
</dbReference>
<dbReference type="Pfam" id="PF02535">
    <property type="entry name" value="Zip"/>
    <property type="match status" value="1"/>
</dbReference>
<keyword id="KW-1003">Cell membrane</keyword>
<keyword id="KW-0325">Glycoprotein</keyword>
<keyword id="KW-0333">Golgi apparatus</keyword>
<keyword id="KW-0406">Ion transport</keyword>
<keyword id="KW-0472">Membrane</keyword>
<keyword id="KW-1185">Reference proteome</keyword>
<keyword id="KW-0812">Transmembrane</keyword>
<keyword id="KW-1133">Transmembrane helix</keyword>
<keyword id="KW-0813">Transport</keyword>
<keyword id="KW-0862">Zinc</keyword>
<keyword id="KW-0864">Zinc transport</keyword>
<feature type="chain" id="PRO_0000213694" description="Zinc transporter ZIP13 homolog">
    <location>
        <begin position="1"/>
        <end position="355"/>
    </location>
</feature>
<feature type="transmembrane region" description="Helical" evidence="1">
    <location>
        <begin position="37"/>
        <end position="57"/>
    </location>
</feature>
<feature type="transmembrane region" description="Helical" evidence="1">
    <location>
        <begin position="79"/>
        <end position="99"/>
    </location>
</feature>
<feature type="transmembrane region" description="Helical" evidence="1">
    <location>
        <begin position="118"/>
        <end position="138"/>
    </location>
</feature>
<feature type="transmembrane region" description="Helical" evidence="1">
    <location>
        <begin position="273"/>
        <end position="293"/>
    </location>
</feature>
<feature type="transmembrane region" description="Helical" evidence="1">
    <location>
        <begin position="301"/>
        <end position="321"/>
    </location>
</feature>
<feature type="glycosylation site" description="N-linked (GlcNAc...) asparagine" evidence="1">
    <location>
        <position position="4"/>
    </location>
</feature>
<feature type="glycosylation site" description="N-linked (GlcNAc...) asparagine" evidence="1">
    <location>
        <position position="218"/>
    </location>
</feature>
<accession>Q9VAF0</accession>
<accession>Q53YH2</accession>
<organism>
    <name type="scientific">Drosophila melanogaster</name>
    <name type="common">Fruit fly</name>
    <dbReference type="NCBI Taxonomy" id="7227"/>
    <lineage>
        <taxon>Eukaryota</taxon>
        <taxon>Metazoa</taxon>
        <taxon>Ecdysozoa</taxon>
        <taxon>Arthropoda</taxon>
        <taxon>Hexapoda</taxon>
        <taxon>Insecta</taxon>
        <taxon>Pterygota</taxon>
        <taxon>Neoptera</taxon>
        <taxon>Endopterygota</taxon>
        <taxon>Diptera</taxon>
        <taxon>Brachycera</taxon>
        <taxon>Muscomorpha</taxon>
        <taxon>Ephydroidea</taxon>
        <taxon>Drosophilidae</taxon>
        <taxon>Drosophila</taxon>
        <taxon>Sophophora</taxon>
    </lineage>
</organism>
<protein>
    <recommendedName>
        <fullName>Zinc transporter ZIP13 homolog</fullName>
    </recommendedName>
    <alternativeName>
        <fullName>Zinc/iron regulated transporter-related protein 99C</fullName>
    </alternativeName>
</protein>
<comment type="function">
    <text evidence="2">Involved in zinc transport and homeostasis.</text>
</comment>
<comment type="subcellular location">
    <subcellularLocation>
        <location evidence="2">Basolateral cell membrane</location>
        <topology evidence="2">Multi-pass membrane protein</topology>
    </subcellularLocation>
    <subcellularLocation>
        <location evidence="3">Golgi apparatus membrane</location>
        <topology evidence="3">Multi-pass membrane protein</topology>
    </subcellularLocation>
    <text>Also detected on intracellular membranes.</text>
</comment>
<comment type="similarity">
    <text evidence="3">Belongs to the ZIP transporter (TC 2.A.5) family. KE4/Catsup subfamily.</text>
</comment>